<proteinExistence type="inferred from homology"/>
<dbReference type="EC" id="1.5.1.5" evidence="1"/>
<dbReference type="EC" id="3.5.4.9" evidence="1"/>
<dbReference type="EMBL" id="CP001213">
    <property type="protein sequence ID" value="ACL29781.1"/>
    <property type="molecule type" value="Genomic_DNA"/>
</dbReference>
<dbReference type="RefSeq" id="WP_004217745.1">
    <property type="nucleotide sequence ID" value="NC_011835.1"/>
</dbReference>
<dbReference type="SMR" id="B8DUV2"/>
<dbReference type="STRING" id="442563.BLA_1499"/>
<dbReference type="KEGG" id="bla:BLA_1499"/>
<dbReference type="HOGENOM" id="CLU_034045_3_0_11"/>
<dbReference type="UniPathway" id="UPA00193"/>
<dbReference type="Proteomes" id="UP000002456">
    <property type="component" value="Chromosome"/>
</dbReference>
<dbReference type="GO" id="GO:0005829">
    <property type="term" value="C:cytosol"/>
    <property type="evidence" value="ECO:0007669"/>
    <property type="project" value="TreeGrafter"/>
</dbReference>
<dbReference type="GO" id="GO:0004477">
    <property type="term" value="F:methenyltetrahydrofolate cyclohydrolase activity"/>
    <property type="evidence" value="ECO:0007669"/>
    <property type="project" value="UniProtKB-UniRule"/>
</dbReference>
<dbReference type="GO" id="GO:0004488">
    <property type="term" value="F:methylenetetrahydrofolate dehydrogenase (NADP+) activity"/>
    <property type="evidence" value="ECO:0007669"/>
    <property type="project" value="UniProtKB-UniRule"/>
</dbReference>
<dbReference type="GO" id="GO:0000105">
    <property type="term" value="P:L-histidine biosynthetic process"/>
    <property type="evidence" value="ECO:0007669"/>
    <property type="project" value="UniProtKB-KW"/>
</dbReference>
<dbReference type="GO" id="GO:0009086">
    <property type="term" value="P:methionine biosynthetic process"/>
    <property type="evidence" value="ECO:0007669"/>
    <property type="project" value="UniProtKB-KW"/>
</dbReference>
<dbReference type="GO" id="GO:0006164">
    <property type="term" value="P:purine nucleotide biosynthetic process"/>
    <property type="evidence" value="ECO:0007669"/>
    <property type="project" value="UniProtKB-KW"/>
</dbReference>
<dbReference type="GO" id="GO:0035999">
    <property type="term" value="P:tetrahydrofolate interconversion"/>
    <property type="evidence" value="ECO:0007669"/>
    <property type="project" value="UniProtKB-UniRule"/>
</dbReference>
<dbReference type="CDD" id="cd01080">
    <property type="entry name" value="NAD_bind_m-THF_DH_Cyclohyd"/>
    <property type="match status" value="1"/>
</dbReference>
<dbReference type="FunFam" id="3.40.50.10860:FF:000005">
    <property type="entry name" value="C-1-tetrahydrofolate synthase, cytoplasmic, putative"/>
    <property type="match status" value="1"/>
</dbReference>
<dbReference type="Gene3D" id="3.40.50.10860">
    <property type="entry name" value="Leucine Dehydrogenase, chain A, domain 1"/>
    <property type="match status" value="1"/>
</dbReference>
<dbReference type="Gene3D" id="3.40.50.720">
    <property type="entry name" value="NAD(P)-binding Rossmann-like Domain"/>
    <property type="match status" value="1"/>
</dbReference>
<dbReference type="HAMAP" id="MF_01576">
    <property type="entry name" value="THF_DHG_CYH"/>
    <property type="match status" value="1"/>
</dbReference>
<dbReference type="InterPro" id="IPR046346">
    <property type="entry name" value="Aminoacid_DH-like_N_sf"/>
</dbReference>
<dbReference type="InterPro" id="IPR036291">
    <property type="entry name" value="NAD(P)-bd_dom_sf"/>
</dbReference>
<dbReference type="InterPro" id="IPR000672">
    <property type="entry name" value="THF_DH/CycHdrlase"/>
</dbReference>
<dbReference type="InterPro" id="IPR020630">
    <property type="entry name" value="THF_DH/CycHdrlase_cat_dom"/>
</dbReference>
<dbReference type="InterPro" id="IPR020631">
    <property type="entry name" value="THF_DH/CycHdrlase_NAD-bd_dom"/>
</dbReference>
<dbReference type="NCBIfam" id="NF010789">
    <property type="entry name" value="PRK14193.1"/>
    <property type="match status" value="1"/>
</dbReference>
<dbReference type="PANTHER" id="PTHR48099:SF5">
    <property type="entry name" value="C-1-TETRAHYDROFOLATE SYNTHASE, CYTOPLASMIC"/>
    <property type="match status" value="1"/>
</dbReference>
<dbReference type="PANTHER" id="PTHR48099">
    <property type="entry name" value="C-1-TETRAHYDROFOLATE SYNTHASE, CYTOPLASMIC-RELATED"/>
    <property type="match status" value="1"/>
</dbReference>
<dbReference type="Pfam" id="PF00763">
    <property type="entry name" value="THF_DHG_CYH"/>
    <property type="match status" value="1"/>
</dbReference>
<dbReference type="Pfam" id="PF02882">
    <property type="entry name" value="THF_DHG_CYH_C"/>
    <property type="match status" value="1"/>
</dbReference>
<dbReference type="PRINTS" id="PR00085">
    <property type="entry name" value="THFDHDRGNASE"/>
</dbReference>
<dbReference type="SUPFAM" id="SSF53223">
    <property type="entry name" value="Aminoacid dehydrogenase-like, N-terminal domain"/>
    <property type="match status" value="1"/>
</dbReference>
<dbReference type="SUPFAM" id="SSF51735">
    <property type="entry name" value="NAD(P)-binding Rossmann-fold domains"/>
    <property type="match status" value="1"/>
</dbReference>
<accession>B8DUV2</accession>
<name>FOLD_BIFA0</name>
<gene>
    <name evidence="1" type="primary">folD</name>
    <name type="ordered locus">BLA_1499</name>
</gene>
<protein>
    <recommendedName>
        <fullName evidence="1">Bifunctional protein FolD</fullName>
    </recommendedName>
    <domain>
        <recommendedName>
            <fullName evidence="1">Methylenetetrahydrofolate dehydrogenase</fullName>
            <ecNumber evidence="1">1.5.1.5</ecNumber>
        </recommendedName>
    </domain>
    <domain>
        <recommendedName>
            <fullName evidence="1">Methenyltetrahydrofolate cyclohydrolase</fullName>
            <ecNumber evidence="1">3.5.4.9</ecNumber>
        </recommendedName>
    </domain>
</protein>
<comment type="function">
    <text evidence="1">Catalyzes the oxidation of 5,10-methylenetetrahydrofolate to 5,10-methenyltetrahydrofolate and then the hydrolysis of 5,10-methenyltetrahydrofolate to 10-formyltetrahydrofolate.</text>
</comment>
<comment type="catalytic activity">
    <reaction evidence="1">
        <text>(6R)-5,10-methylene-5,6,7,8-tetrahydrofolate + NADP(+) = (6R)-5,10-methenyltetrahydrofolate + NADPH</text>
        <dbReference type="Rhea" id="RHEA:22812"/>
        <dbReference type="ChEBI" id="CHEBI:15636"/>
        <dbReference type="ChEBI" id="CHEBI:57455"/>
        <dbReference type="ChEBI" id="CHEBI:57783"/>
        <dbReference type="ChEBI" id="CHEBI:58349"/>
        <dbReference type="EC" id="1.5.1.5"/>
    </reaction>
</comment>
<comment type="catalytic activity">
    <reaction evidence="1">
        <text>(6R)-5,10-methenyltetrahydrofolate + H2O = (6R)-10-formyltetrahydrofolate + H(+)</text>
        <dbReference type="Rhea" id="RHEA:23700"/>
        <dbReference type="ChEBI" id="CHEBI:15377"/>
        <dbReference type="ChEBI" id="CHEBI:15378"/>
        <dbReference type="ChEBI" id="CHEBI:57455"/>
        <dbReference type="ChEBI" id="CHEBI:195366"/>
        <dbReference type="EC" id="3.5.4.9"/>
    </reaction>
</comment>
<comment type="pathway">
    <text evidence="1">One-carbon metabolism; tetrahydrofolate interconversion.</text>
</comment>
<comment type="subunit">
    <text evidence="1">Homodimer.</text>
</comment>
<comment type="similarity">
    <text evidence="1">Belongs to the tetrahydrofolate dehydrogenase/cyclohydrolase family.</text>
</comment>
<feature type="chain" id="PRO_1000185596" description="Bifunctional protein FolD">
    <location>
        <begin position="1"/>
        <end position="297"/>
    </location>
</feature>
<feature type="binding site" evidence="1">
    <location>
        <begin position="168"/>
        <end position="170"/>
    </location>
    <ligand>
        <name>NADP(+)</name>
        <dbReference type="ChEBI" id="CHEBI:58349"/>
    </ligand>
</feature>
<feature type="binding site" evidence="1">
    <location>
        <position position="195"/>
    </location>
    <ligand>
        <name>NADP(+)</name>
        <dbReference type="ChEBI" id="CHEBI:58349"/>
    </ligand>
</feature>
<feature type="binding site" evidence="1">
    <location>
        <position position="236"/>
    </location>
    <ligand>
        <name>NADP(+)</name>
        <dbReference type="ChEBI" id="CHEBI:58349"/>
    </ligand>
</feature>
<sequence>MAIVLDGKKVAGQIKADLASRVAGLARMGMVPGLGTVLVGDDPGSMKYVEGKHRDCEEVGIASIRRQLPATATTEDVLAVVRDLNEDPACTGYIIQLPLPAHIDSNAIIGAIDPTKDADGMHPYNLGELVLHVRGDITTPLPCTPRGVLALLDAYGIELAGRNVCVLGRGITIGRTIGLMLTRSGVNATVTLCHTGTRNIEEHIRRADVVIAAVGVAGFVQVEHVKPGAVLIDVGVSRVFDEQAGRMRIVGDVDSEAHAVAGAYSPNPGGVGPMTRAMLLANVVEQAERMAGIREDS</sequence>
<keyword id="KW-0028">Amino-acid biosynthesis</keyword>
<keyword id="KW-0368">Histidine biosynthesis</keyword>
<keyword id="KW-0378">Hydrolase</keyword>
<keyword id="KW-0486">Methionine biosynthesis</keyword>
<keyword id="KW-0511">Multifunctional enzyme</keyword>
<keyword id="KW-0521">NADP</keyword>
<keyword id="KW-0554">One-carbon metabolism</keyword>
<keyword id="KW-0560">Oxidoreductase</keyword>
<keyword id="KW-0658">Purine biosynthesis</keyword>
<keyword id="KW-1185">Reference proteome</keyword>
<reference key="1">
    <citation type="journal article" date="2009" name="J. Bacteriol.">
        <title>Genome sequence of the probiotic bacterium Bifidobacterium animalis subsp. lactis AD011.</title>
        <authorList>
            <person name="Kim J.F."/>
            <person name="Jeong H."/>
            <person name="Yu D.S."/>
            <person name="Choi S.-H."/>
            <person name="Hur C.-G."/>
            <person name="Park M.-S."/>
            <person name="Yoon S.H."/>
            <person name="Kim D.-W."/>
            <person name="Ji G.E."/>
            <person name="Park H.-S."/>
            <person name="Oh T.K."/>
        </authorList>
    </citation>
    <scope>NUCLEOTIDE SEQUENCE [LARGE SCALE GENOMIC DNA]</scope>
    <source>
        <strain>AD011</strain>
    </source>
</reference>
<organism>
    <name type="scientific">Bifidobacterium animalis subsp. lactis (strain AD011)</name>
    <dbReference type="NCBI Taxonomy" id="442563"/>
    <lineage>
        <taxon>Bacteria</taxon>
        <taxon>Bacillati</taxon>
        <taxon>Actinomycetota</taxon>
        <taxon>Actinomycetes</taxon>
        <taxon>Bifidobacteriales</taxon>
        <taxon>Bifidobacteriaceae</taxon>
        <taxon>Bifidobacterium</taxon>
    </lineage>
</organism>
<evidence type="ECO:0000255" key="1">
    <source>
        <dbReference type="HAMAP-Rule" id="MF_01576"/>
    </source>
</evidence>